<organism>
    <name type="scientific">Triticum aestivum</name>
    <name type="common">Wheat</name>
    <dbReference type="NCBI Taxonomy" id="4565"/>
    <lineage>
        <taxon>Eukaryota</taxon>
        <taxon>Viridiplantae</taxon>
        <taxon>Streptophyta</taxon>
        <taxon>Embryophyta</taxon>
        <taxon>Tracheophyta</taxon>
        <taxon>Spermatophyta</taxon>
        <taxon>Magnoliopsida</taxon>
        <taxon>Liliopsida</taxon>
        <taxon>Poales</taxon>
        <taxon>Poaceae</taxon>
        <taxon>BOP clade</taxon>
        <taxon>Pooideae</taxon>
        <taxon>Triticodae</taxon>
        <taxon>Triticeae</taxon>
        <taxon>Triticinae</taxon>
        <taxon>Triticum</taxon>
    </lineage>
</organism>
<protein>
    <recommendedName>
        <fullName evidence="2">Small ribosomal subunit protein uS12cz/uS12cy</fullName>
    </recommendedName>
    <alternativeName>
        <fullName evidence="3">30S ribosomal protein S12, chloroplastic</fullName>
    </alternativeName>
</protein>
<feature type="chain" id="PRO_0000146431" description="Small ribosomal subunit protein uS12cz/uS12cy">
    <location>
        <begin position="1"/>
        <end position="122"/>
    </location>
</feature>
<feature type="sequence variant" description="In RPS12-B.">
    <location>
        <begin position="39"/>
        <end position="40"/>
    </location>
</feature>
<feature type="sequence variant" description="In RPS12-B.">
    <original>LQ</original>
    <variation>SR</variation>
    <location>
        <begin position="113"/>
        <end position="114"/>
    </location>
</feature>
<sequence length="122" mass="13676">MPTVKQLIRNARQPIRNARKTAALKGCPQRRGTCARVYNPKKPNSALRKVARVRLTSGFEITAYIPGIGHNLQEHSVVLVRGGRVKDLPGVRYRIIRGTLDAVAVKNRQQGRLQYGVKKPKK</sequence>
<keyword id="KW-0150">Chloroplast</keyword>
<keyword id="KW-0934">Plastid</keyword>
<keyword id="KW-1185">Reference proteome</keyword>
<keyword id="KW-0687">Ribonucleoprotein</keyword>
<keyword id="KW-0689">Ribosomal protein</keyword>
<keyword id="KW-0694">RNA-binding</keyword>
<keyword id="KW-0699">rRNA-binding</keyword>
<reference key="1">
    <citation type="journal article" date="2000" name="Plant Mol. Biol. Rep.">
        <title>Chinese spring wheat (Triticum aestivum L.) chloroplast genome: complete sequence and contig clones.</title>
        <authorList>
            <person name="Ogihara Y."/>
            <person name="Isono K."/>
            <person name="Kojima T."/>
            <person name="Endo A."/>
            <person name="Hanaoka M."/>
            <person name="Shiina T."/>
            <person name="Terachi T."/>
            <person name="Utsugi S."/>
            <person name="Murata M."/>
            <person name="Mori N."/>
            <person name="Takumi S."/>
            <person name="Ikeo K."/>
            <person name="Gojobori T."/>
            <person name="Murai R."/>
            <person name="Murai K."/>
            <person name="Matsuoka Y."/>
            <person name="Ohnishi Y."/>
            <person name="Tajiri H."/>
            <person name="Tsunewaki K."/>
        </authorList>
    </citation>
    <scope>NUCLEOTIDE SEQUENCE [LARGE SCALE GENOMIC DNA]</scope>
    <source>
        <strain>cv. Chinese Spring</strain>
    </source>
</reference>
<reference key="2">
    <citation type="journal article" date="1990" name="Plant Mol. Biol.">
        <title>Nucleotide sequence of a wheat chloroplast gene encoding the proteolytic subunit of an ATP-dependent protease.</title>
        <authorList>
            <person name="Gray J.C."/>
            <person name="Hird S.M."/>
            <person name="Dyer T.A."/>
        </authorList>
    </citation>
    <scope>NUCLEOTIDE SEQUENCE [GENOMIC DNA] OF 1-38</scope>
    <source>
        <strain>cv. Mardler</strain>
    </source>
</reference>
<geneLocation type="chloroplast"/>
<proteinExistence type="inferred from homology"/>
<accession>P24066</accession>
<evidence type="ECO:0000250" key="1"/>
<evidence type="ECO:0000255" key="2">
    <source>
        <dbReference type="HAMAP-Rule" id="MF_00403"/>
    </source>
</evidence>
<evidence type="ECO:0000305" key="3"/>
<dbReference type="EMBL" id="AB042240">
    <property type="protein sequence ID" value="BAB47057.1"/>
    <property type="molecule type" value="Genomic_DNA"/>
</dbReference>
<dbReference type="EMBL" id="AB042240">
    <property type="protein sequence ID" value="BAB47079.1"/>
    <property type="molecule type" value="Genomic_DNA"/>
</dbReference>
<dbReference type="EMBL" id="X54484">
    <property type="protein sequence ID" value="CAA38355.1"/>
    <property type="molecule type" value="Genomic_DNA"/>
</dbReference>
<dbReference type="PIR" id="S12409">
    <property type="entry name" value="S12409"/>
</dbReference>
<dbReference type="SMR" id="P24066"/>
<dbReference type="STRING" id="4565.P24066"/>
<dbReference type="KEGG" id="taes:803094"/>
<dbReference type="Proteomes" id="UP000019116">
    <property type="component" value="Chloroplast"/>
</dbReference>
<dbReference type="GO" id="GO:0009507">
    <property type="term" value="C:chloroplast"/>
    <property type="evidence" value="ECO:0007669"/>
    <property type="project" value="UniProtKB-SubCell"/>
</dbReference>
<dbReference type="GO" id="GO:0005840">
    <property type="term" value="C:ribosome"/>
    <property type="evidence" value="ECO:0000318"/>
    <property type="project" value="GO_Central"/>
</dbReference>
<dbReference type="GO" id="GO:0015935">
    <property type="term" value="C:small ribosomal subunit"/>
    <property type="evidence" value="ECO:0007669"/>
    <property type="project" value="InterPro"/>
</dbReference>
<dbReference type="GO" id="GO:0019843">
    <property type="term" value="F:rRNA binding"/>
    <property type="evidence" value="ECO:0007669"/>
    <property type="project" value="UniProtKB-UniRule"/>
</dbReference>
<dbReference type="GO" id="GO:0003735">
    <property type="term" value="F:structural constituent of ribosome"/>
    <property type="evidence" value="ECO:0000318"/>
    <property type="project" value="GO_Central"/>
</dbReference>
<dbReference type="GO" id="GO:0006412">
    <property type="term" value="P:translation"/>
    <property type="evidence" value="ECO:0000318"/>
    <property type="project" value="GO_Central"/>
</dbReference>
<dbReference type="CDD" id="cd03368">
    <property type="entry name" value="Ribosomal_S12"/>
    <property type="match status" value="1"/>
</dbReference>
<dbReference type="FunFam" id="2.40.50.140:FF:000008">
    <property type="entry name" value="30S ribosomal protein S12, chloroplastic"/>
    <property type="match status" value="1"/>
</dbReference>
<dbReference type="Gene3D" id="2.40.50.140">
    <property type="entry name" value="Nucleic acid-binding proteins"/>
    <property type="match status" value="1"/>
</dbReference>
<dbReference type="HAMAP" id="MF_00403_B">
    <property type="entry name" value="Ribosomal_uS12_B"/>
    <property type="match status" value="1"/>
</dbReference>
<dbReference type="InterPro" id="IPR012340">
    <property type="entry name" value="NA-bd_OB-fold"/>
</dbReference>
<dbReference type="InterPro" id="IPR006032">
    <property type="entry name" value="Ribosomal_uS12"/>
</dbReference>
<dbReference type="InterPro" id="IPR005679">
    <property type="entry name" value="Ribosomal_uS12_bac"/>
</dbReference>
<dbReference type="NCBIfam" id="TIGR00981">
    <property type="entry name" value="rpsL_bact"/>
    <property type="match status" value="1"/>
</dbReference>
<dbReference type="PANTHER" id="PTHR11652">
    <property type="entry name" value="30S RIBOSOMAL PROTEIN S12 FAMILY MEMBER"/>
    <property type="match status" value="1"/>
</dbReference>
<dbReference type="Pfam" id="PF00164">
    <property type="entry name" value="Ribosom_S12_S23"/>
    <property type="match status" value="1"/>
</dbReference>
<dbReference type="PIRSF" id="PIRSF002133">
    <property type="entry name" value="Ribosomal_S12/S23"/>
    <property type="match status" value="1"/>
</dbReference>
<dbReference type="PRINTS" id="PR01034">
    <property type="entry name" value="RIBOSOMALS12"/>
</dbReference>
<dbReference type="SUPFAM" id="SSF50249">
    <property type="entry name" value="Nucleic acid-binding proteins"/>
    <property type="match status" value="1"/>
</dbReference>
<dbReference type="PROSITE" id="PS00055">
    <property type="entry name" value="RIBOSOMAL_S12"/>
    <property type="match status" value="1"/>
</dbReference>
<comment type="function">
    <text evidence="1">With S4 and S5 plays an important role in translational accuracy. Located at the interface of the 30S and 50S subunits (By similarity).</text>
</comment>
<comment type="subunit">
    <text evidence="1">Part of the 30S ribosomal subunit.</text>
</comment>
<comment type="subcellular location">
    <subcellularLocation>
        <location>Plastid</location>
        <location>Chloroplast</location>
    </subcellularLocation>
</comment>
<comment type="similarity">
    <text evidence="3">Belongs to the universal ribosomal protein uS12 family.</text>
</comment>
<gene>
    <name type="primary">rps12-A</name>
</gene>
<gene>
    <name type="primary">rps12-B</name>
</gene>
<name>RR12_WHEAT</name>